<evidence type="ECO:0000250" key="1"/>
<evidence type="ECO:0000269" key="2">
    <source>
    </source>
</evidence>
<evidence type="ECO:0000269" key="3">
    <source>
    </source>
</evidence>
<evidence type="ECO:0000305" key="4"/>
<accession>Q6L5I5</accession>
<accession>A0A0P0WQB1</accession>
<accession>Q8VXC7</accession>
<feature type="initiator methionine" description="Removed" evidence="1">
    <location>
        <position position="1"/>
    </location>
</feature>
<feature type="chain" id="PRO_0000414085" description="Mitochondrial outer membrane protein porin 2">
    <location>
        <begin position="2"/>
        <end position="280"/>
    </location>
</feature>
<dbReference type="EMBL" id="AJ251562">
    <property type="protein sequence ID" value="CAC80850.1"/>
    <property type="molecule type" value="mRNA"/>
</dbReference>
<dbReference type="EMBL" id="AC097112">
    <property type="protein sequence ID" value="AAT39214.1"/>
    <property type="molecule type" value="Genomic_DNA"/>
</dbReference>
<dbReference type="EMBL" id="AP008211">
    <property type="protein sequence ID" value="BAF18076.1"/>
    <property type="molecule type" value="Genomic_DNA"/>
</dbReference>
<dbReference type="EMBL" id="AP014961">
    <property type="protein sequence ID" value="BAS95080.1"/>
    <property type="molecule type" value="Genomic_DNA"/>
</dbReference>
<dbReference type="EMBL" id="CM000142">
    <property type="protein sequence ID" value="EEE64499.1"/>
    <property type="molecule type" value="Genomic_DNA"/>
</dbReference>
<dbReference type="EMBL" id="AK071833">
    <property type="protein sequence ID" value="BAG92718.1"/>
    <property type="molecule type" value="mRNA"/>
</dbReference>
<dbReference type="RefSeq" id="XP_015639259.1">
    <property type="nucleotide sequence ID" value="XM_015783773.1"/>
</dbReference>
<dbReference type="SMR" id="Q6L5I5"/>
<dbReference type="FunCoup" id="Q6L5I5">
    <property type="interactions" value="2495"/>
</dbReference>
<dbReference type="STRING" id="39947.Q6L5I5"/>
<dbReference type="PaxDb" id="39947-Q6L5I5"/>
<dbReference type="EnsemblPlants" id="Os05t0536200-01">
    <property type="protein sequence ID" value="Os05t0536200-01"/>
    <property type="gene ID" value="Os05g0536200"/>
</dbReference>
<dbReference type="Gramene" id="Os05t0536200-01">
    <property type="protein sequence ID" value="Os05t0536200-01"/>
    <property type="gene ID" value="Os05g0536200"/>
</dbReference>
<dbReference type="KEGG" id="dosa:Os05g0536200"/>
<dbReference type="eggNOG" id="KOG3126">
    <property type="taxonomic scope" value="Eukaryota"/>
</dbReference>
<dbReference type="HOGENOM" id="CLU_069937_0_0_1"/>
<dbReference type="InParanoid" id="Q6L5I5"/>
<dbReference type="OMA" id="NCTRPVC"/>
<dbReference type="OrthoDB" id="7827681at2759"/>
<dbReference type="Proteomes" id="UP000000763">
    <property type="component" value="Chromosome 5"/>
</dbReference>
<dbReference type="Proteomes" id="UP000007752">
    <property type="component" value="Chromosome 5"/>
</dbReference>
<dbReference type="Proteomes" id="UP000059680">
    <property type="component" value="Chromosome 5"/>
</dbReference>
<dbReference type="GO" id="GO:0005741">
    <property type="term" value="C:mitochondrial outer membrane"/>
    <property type="evidence" value="ECO:0000318"/>
    <property type="project" value="GO_Central"/>
</dbReference>
<dbReference type="GO" id="GO:0046930">
    <property type="term" value="C:pore complex"/>
    <property type="evidence" value="ECO:0007669"/>
    <property type="project" value="UniProtKB-KW"/>
</dbReference>
<dbReference type="GO" id="GO:0015288">
    <property type="term" value="F:porin activity"/>
    <property type="evidence" value="ECO:0007669"/>
    <property type="project" value="UniProtKB-KW"/>
</dbReference>
<dbReference type="GO" id="GO:0008308">
    <property type="term" value="F:voltage-gated monoatomic anion channel activity"/>
    <property type="evidence" value="ECO:0000318"/>
    <property type="project" value="GO_Central"/>
</dbReference>
<dbReference type="CDD" id="cd07306">
    <property type="entry name" value="Porin3_VDAC"/>
    <property type="match status" value="1"/>
</dbReference>
<dbReference type="FunFam" id="2.40.160.10:FF:000003">
    <property type="entry name" value="Outer mitochondrial membrane protein porin"/>
    <property type="match status" value="1"/>
</dbReference>
<dbReference type="Gene3D" id="2.40.160.10">
    <property type="entry name" value="Porin"/>
    <property type="match status" value="1"/>
</dbReference>
<dbReference type="InterPro" id="IPR023614">
    <property type="entry name" value="Porin_dom_sf"/>
</dbReference>
<dbReference type="InterPro" id="IPR001925">
    <property type="entry name" value="Porin_Euk"/>
</dbReference>
<dbReference type="InterPro" id="IPR027246">
    <property type="entry name" value="Porin_Euk/Tom40"/>
</dbReference>
<dbReference type="PANTHER" id="PTHR11743:SF34">
    <property type="entry name" value="MITOCHONDRIAL OUTER MEMBRANE PROTEIN PORIN 2"/>
    <property type="match status" value="1"/>
</dbReference>
<dbReference type="PANTHER" id="PTHR11743">
    <property type="entry name" value="VOLTAGE-DEPENDENT ANION-SELECTIVE CHANNEL"/>
    <property type="match status" value="1"/>
</dbReference>
<dbReference type="Pfam" id="PF01459">
    <property type="entry name" value="Porin_3"/>
    <property type="match status" value="1"/>
</dbReference>
<keyword id="KW-0406">Ion transport</keyword>
<keyword id="KW-0472">Membrane</keyword>
<keyword id="KW-0496">Mitochondrion</keyword>
<keyword id="KW-1000">Mitochondrion outer membrane</keyword>
<keyword id="KW-0626">Porin</keyword>
<keyword id="KW-1185">Reference proteome</keyword>
<keyword id="KW-0812">Transmembrane</keyword>
<keyword id="KW-1134">Transmembrane beta strand</keyword>
<keyword id="KW-0813">Transport</keyword>
<gene>
    <name type="primary">VDAC2</name>
    <name type="ordered locus">Os05g0536200</name>
    <name type="ordered locus">LOC_Os05g45950</name>
    <name type="ORF">OJ1741_B01.9</name>
    <name type="ORF">OsJ_19349</name>
</gene>
<reference key="1">
    <citation type="journal article" date="2003" name="Biochim. Biophys. Acta">
        <title>Sequence analysis, transcriptional and posttranscriptional regulation of the rice vdac family.</title>
        <authorList>
            <person name="Al Bitar F."/>
            <person name="Roosens N."/>
            <person name="Smeyers M."/>
            <person name="Vauterin M."/>
            <person name="Van Boxtel J."/>
            <person name="Jacobs M."/>
            <person name="Homble F."/>
        </authorList>
    </citation>
    <scope>NUCLEOTIDE SEQUENCE [MRNA]</scope>
    <scope>TISSUE SPECIFICITY</scope>
    <scope>DEVELOPMENTAL STAGE</scope>
    <scope>INDUCTION</scope>
    <source>
        <strain>cv. Nipponbare</strain>
    </source>
</reference>
<reference key="2">
    <citation type="journal article" date="2005" name="Mol. Genet. Genomics">
        <title>A fine physical map of the rice chromosome 5.</title>
        <authorList>
            <person name="Cheng C.-H."/>
            <person name="Chung M.C."/>
            <person name="Liu S.-M."/>
            <person name="Chen S.-K."/>
            <person name="Kao F.Y."/>
            <person name="Lin S.-J."/>
            <person name="Hsiao S.-H."/>
            <person name="Tseng I.C."/>
            <person name="Hsing Y.-I.C."/>
            <person name="Wu H.-P."/>
            <person name="Chen C.-S."/>
            <person name="Shaw J.-F."/>
            <person name="Wu J."/>
            <person name="Matsumoto T."/>
            <person name="Sasaki T."/>
            <person name="Chen H.-C."/>
            <person name="Chow T.-Y."/>
        </authorList>
    </citation>
    <scope>NUCLEOTIDE SEQUENCE [LARGE SCALE GENOMIC DNA]</scope>
    <source>
        <strain>cv. Nipponbare</strain>
    </source>
</reference>
<reference key="3">
    <citation type="journal article" date="2005" name="Nature">
        <title>The map-based sequence of the rice genome.</title>
        <authorList>
            <consortium name="International rice genome sequencing project (IRGSP)"/>
        </authorList>
    </citation>
    <scope>NUCLEOTIDE SEQUENCE [LARGE SCALE GENOMIC DNA]</scope>
    <source>
        <strain>cv. Nipponbare</strain>
    </source>
</reference>
<reference key="4">
    <citation type="journal article" date="2008" name="Nucleic Acids Res.">
        <title>The rice annotation project database (RAP-DB): 2008 update.</title>
        <authorList>
            <consortium name="The rice annotation project (RAP)"/>
        </authorList>
    </citation>
    <scope>GENOME REANNOTATION</scope>
    <source>
        <strain>cv. Nipponbare</strain>
    </source>
</reference>
<reference key="5">
    <citation type="journal article" date="2013" name="Rice">
        <title>Improvement of the Oryza sativa Nipponbare reference genome using next generation sequence and optical map data.</title>
        <authorList>
            <person name="Kawahara Y."/>
            <person name="de la Bastide M."/>
            <person name="Hamilton J.P."/>
            <person name="Kanamori H."/>
            <person name="McCombie W.R."/>
            <person name="Ouyang S."/>
            <person name="Schwartz D.C."/>
            <person name="Tanaka T."/>
            <person name="Wu J."/>
            <person name="Zhou S."/>
            <person name="Childs K.L."/>
            <person name="Davidson R.M."/>
            <person name="Lin H."/>
            <person name="Quesada-Ocampo L."/>
            <person name="Vaillancourt B."/>
            <person name="Sakai H."/>
            <person name="Lee S.S."/>
            <person name="Kim J."/>
            <person name="Numa H."/>
            <person name="Itoh T."/>
            <person name="Buell C.R."/>
            <person name="Matsumoto T."/>
        </authorList>
    </citation>
    <scope>GENOME REANNOTATION</scope>
    <source>
        <strain>cv. Nipponbare</strain>
    </source>
</reference>
<reference key="6">
    <citation type="journal article" date="2005" name="PLoS Biol.">
        <title>The genomes of Oryza sativa: a history of duplications.</title>
        <authorList>
            <person name="Yu J."/>
            <person name="Wang J."/>
            <person name="Lin W."/>
            <person name="Li S."/>
            <person name="Li H."/>
            <person name="Zhou J."/>
            <person name="Ni P."/>
            <person name="Dong W."/>
            <person name="Hu S."/>
            <person name="Zeng C."/>
            <person name="Zhang J."/>
            <person name="Zhang Y."/>
            <person name="Li R."/>
            <person name="Xu Z."/>
            <person name="Li S."/>
            <person name="Li X."/>
            <person name="Zheng H."/>
            <person name="Cong L."/>
            <person name="Lin L."/>
            <person name="Yin J."/>
            <person name="Geng J."/>
            <person name="Li G."/>
            <person name="Shi J."/>
            <person name="Liu J."/>
            <person name="Lv H."/>
            <person name="Li J."/>
            <person name="Wang J."/>
            <person name="Deng Y."/>
            <person name="Ran L."/>
            <person name="Shi X."/>
            <person name="Wang X."/>
            <person name="Wu Q."/>
            <person name="Li C."/>
            <person name="Ren X."/>
            <person name="Wang J."/>
            <person name="Wang X."/>
            <person name="Li D."/>
            <person name="Liu D."/>
            <person name="Zhang X."/>
            <person name="Ji Z."/>
            <person name="Zhao W."/>
            <person name="Sun Y."/>
            <person name="Zhang Z."/>
            <person name="Bao J."/>
            <person name="Han Y."/>
            <person name="Dong L."/>
            <person name="Ji J."/>
            <person name="Chen P."/>
            <person name="Wu S."/>
            <person name="Liu J."/>
            <person name="Xiao Y."/>
            <person name="Bu D."/>
            <person name="Tan J."/>
            <person name="Yang L."/>
            <person name="Ye C."/>
            <person name="Zhang J."/>
            <person name="Xu J."/>
            <person name="Zhou Y."/>
            <person name="Yu Y."/>
            <person name="Zhang B."/>
            <person name="Zhuang S."/>
            <person name="Wei H."/>
            <person name="Liu B."/>
            <person name="Lei M."/>
            <person name="Yu H."/>
            <person name="Li Y."/>
            <person name="Xu H."/>
            <person name="Wei S."/>
            <person name="He X."/>
            <person name="Fang L."/>
            <person name="Zhang Z."/>
            <person name="Zhang Y."/>
            <person name="Huang X."/>
            <person name="Su Z."/>
            <person name="Tong W."/>
            <person name="Li J."/>
            <person name="Tong Z."/>
            <person name="Li S."/>
            <person name="Ye J."/>
            <person name="Wang L."/>
            <person name="Fang L."/>
            <person name="Lei T."/>
            <person name="Chen C.-S."/>
            <person name="Chen H.-C."/>
            <person name="Xu Z."/>
            <person name="Li H."/>
            <person name="Huang H."/>
            <person name="Zhang F."/>
            <person name="Xu H."/>
            <person name="Li N."/>
            <person name="Zhao C."/>
            <person name="Li S."/>
            <person name="Dong L."/>
            <person name="Huang Y."/>
            <person name="Li L."/>
            <person name="Xi Y."/>
            <person name="Qi Q."/>
            <person name="Li W."/>
            <person name="Zhang B."/>
            <person name="Hu W."/>
            <person name="Zhang Y."/>
            <person name="Tian X."/>
            <person name="Jiao Y."/>
            <person name="Liang X."/>
            <person name="Jin J."/>
            <person name="Gao L."/>
            <person name="Zheng W."/>
            <person name="Hao B."/>
            <person name="Liu S.-M."/>
            <person name="Wang W."/>
            <person name="Yuan L."/>
            <person name="Cao M."/>
            <person name="McDermott J."/>
            <person name="Samudrala R."/>
            <person name="Wang J."/>
            <person name="Wong G.K.-S."/>
            <person name="Yang H."/>
        </authorList>
    </citation>
    <scope>NUCLEOTIDE SEQUENCE [LARGE SCALE GENOMIC DNA]</scope>
    <source>
        <strain>cv. Nipponbare</strain>
    </source>
</reference>
<reference key="7">
    <citation type="journal article" date="2003" name="Science">
        <title>Collection, mapping, and annotation of over 28,000 cDNA clones from japonica rice.</title>
        <authorList>
            <consortium name="The rice full-length cDNA consortium"/>
        </authorList>
    </citation>
    <scope>NUCLEOTIDE SEQUENCE [LARGE SCALE MRNA]</scope>
    <source>
        <strain>cv. Nipponbare</strain>
    </source>
</reference>
<reference key="8">
    <citation type="journal article" date="2002" name="Biochim. Biophys. Acta">
        <title>Expression of the rice vdac isoform2: histochemical localization and expression level.</title>
        <authorList>
            <person name="Al Bitar F."/>
            <person name="Roosens N."/>
            <person name="Boxtel J.V."/>
            <person name="Dewaele E."/>
            <person name="Jacobs M."/>
            <person name="Homble F."/>
        </authorList>
    </citation>
    <scope>TISSUE SPECIFICITY</scope>
</reference>
<protein>
    <recommendedName>
        <fullName>Mitochondrial outer membrane protein porin 2</fullName>
    </recommendedName>
    <alternativeName>
        <fullName>Voltage-dependent anion-selective channel protein 2</fullName>
        <shortName>OsVDAC2</shortName>
    </alternativeName>
</protein>
<sequence length="280" mass="29602">MAAAAPPAGPGLYSDIGKKARDLLYRDYHTDQKFTLTTYAANGAAITVAGTKKNESIFSEIQSQVKNNNVSVDVKATSDSKLITTFTVHDLGTPGLKGILSIPFPYQKSAKAEVQYLHPHAGLNAIVGLNANPLVSFSGVFGTGAFAVGTDVAFDTATGDFTKYNAGLSHTTPDLTAALLLNNKGDSLAASYYHKVSKTSAVGAELAHSFSSNENTLTFGTQHALDELTTVKARFNNFGMASALIQHEFRPKSLVTISTEVDTKAIDKSSKVGLSLVLKP</sequence>
<name>VDAC2_ORYSJ</name>
<organism>
    <name type="scientific">Oryza sativa subsp. japonica</name>
    <name type="common">Rice</name>
    <dbReference type="NCBI Taxonomy" id="39947"/>
    <lineage>
        <taxon>Eukaryota</taxon>
        <taxon>Viridiplantae</taxon>
        <taxon>Streptophyta</taxon>
        <taxon>Embryophyta</taxon>
        <taxon>Tracheophyta</taxon>
        <taxon>Spermatophyta</taxon>
        <taxon>Magnoliopsida</taxon>
        <taxon>Liliopsida</taxon>
        <taxon>Poales</taxon>
        <taxon>Poaceae</taxon>
        <taxon>BOP clade</taxon>
        <taxon>Oryzoideae</taxon>
        <taxon>Oryzeae</taxon>
        <taxon>Oryzinae</taxon>
        <taxon>Oryza</taxon>
        <taxon>Oryza sativa</taxon>
    </lineage>
</organism>
<proteinExistence type="evidence at transcript level"/>
<comment type="function">
    <text evidence="1">Forms a channel through the mitochondrial outer membrane that allows diffusion of small hydrophilic molecules. The channel adopts an open conformation at low or zero membrane potential and a closed conformation at potentials above 30-40 mV. The open state has a weak anion selectivity whereas the closed state is cation-selective (By similarity).</text>
</comment>
<comment type="subcellular location">
    <subcellularLocation>
        <location evidence="1">Mitochondrion outer membrane</location>
    </subcellularLocation>
</comment>
<comment type="tissue specificity">
    <text evidence="2 3">Expressed in roots, stems, leaves, palea, lemma and pollen.</text>
</comment>
<comment type="developmental stage">
    <text evidence="3">Highly expressed during the first days following germination and then decreases with time.</text>
</comment>
<comment type="induction">
    <text evidence="3">Not induced by osmotic stress.</text>
</comment>
<comment type="domain">
    <text>Consists mainly of membrane-spanning sided beta-sheets.</text>
</comment>
<comment type="similarity">
    <text evidence="4">Belongs to the eukaryotic mitochondrial porin (TC 1.B.8.1) family.</text>
</comment>